<evidence type="ECO:0000255" key="1">
    <source>
        <dbReference type="HAMAP-Rule" id="MF_00758"/>
    </source>
</evidence>
<gene>
    <name evidence="1" type="primary">yqgE</name>
    <name type="ordered locus">ECS88_3230</name>
</gene>
<name>YQGE_ECO45</name>
<reference key="1">
    <citation type="journal article" date="2009" name="PLoS Genet.">
        <title>Organised genome dynamics in the Escherichia coli species results in highly diverse adaptive paths.</title>
        <authorList>
            <person name="Touchon M."/>
            <person name="Hoede C."/>
            <person name="Tenaillon O."/>
            <person name="Barbe V."/>
            <person name="Baeriswyl S."/>
            <person name="Bidet P."/>
            <person name="Bingen E."/>
            <person name="Bonacorsi S."/>
            <person name="Bouchier C."/>
            <person name="Bouvet O."/>
            <person name="Calteau A."/>
            <person name="Chiapello H."/>
            <person name="Clermont O."/>
            <person name="Cruveiller S."/>
            <person name="Danchin A."/>
            <person name="Diard M."/>
            <person name="Dossat C."/>
            <person name="Karoui M.E."/>
            <person name="Frapy E."/>
            <person name="Garry L."/>
            <person name="Ghigo J.M."/>
            <person name="Gilles A.M."/>
            <person name="Johnson J."/>
            <person name="Le Bouguenec C."/>
            <person name="Lescat M."/>
            <person name="Mangenot S."/>
            <person name="Martinez-Jehanne V."/>
            <person name="Matic I."/>
            <person name="Nassif X."/>
            <person name="Oztas S."/>
            <person name="Petit M.A."/>
            <person name="Pichon C."/>
            <person name="Rouy Z."/>
            <person name="Ruf C.S."/>
            <person name="Schneider D."/>
            <person name="Tourret J."/>
            <person name="Vacherie B."/>
            <person name="Vallenet D."/>
            <person name="Medigue C."/>
            <person name="Rocha E.P.C."/>
            <person name="Denamur E."/>
        </authorList>
    </citation>
    <scope>NUCLEOTIDE SEQUENCE [LARGE SCALE GENOMIC DNA]</scope>
    <source>
        <strain>S88 / ExPEC</strain>
    </source>
</reference>
<comment type="similarity">
    <text evidence="1">Belongs to the UPF0301 (AlgH) family.</text>
</comment>
<feature type="chain" id="PRO_1000198273" description="UPF0301 protein YqgE">
    <location>
        <begin position="1"/>
        <end position="187"/>
    </location>
</feature>
<organism>
    <name type="scientific">Escherichia coli O45:K1 (strain S88 / ExPEC)</name>
    <dbReference type="NCBI Taxonomy" id="585035"/>
    <lineage>
        <taxon>Bacteria</taxon>
        <taxon>Pseudomonadati</taxon>
        <taxon>Pseudomonadota</taxon>
        <taxon>Gammaproteobacteria</taxon>
        <taxon>Enterobacterales</taxon>
        <taxon>Enterobacteriaceae</taxon>
        <taxon>Escherichia</taxon>
    </lineage>
</organism>
<dbReference type="EMBL" id="CU928161">
    <property type="protein sequence ID" value="CAR04465.1"/>
    <property type="molecule type" value="Genomic_DNA"/>
</dbReference>
<dbReference type="RefSeq" id="WP_001053178.1">
    <property type="nucleotide sequence ID" value="NC_011742.1"/>
</dbReference>
<dbReference type="SMR" id="B7MMD6"/>
<dbReference type="KEGG" id="ecz:ECS88_3230"/>
<dbReference type="HOGENOM" id="CLU_057596_1_0_6"/>
<dbReference type="Proteomes" id="UP000000747">
    <property type="component" value="Chromosome"/>
</dbReference>
<dbReference type="GO" id="GO:0005829">
    <property type="term" value="C:cytosol"/>
    <property type="evidence" value="ECO:0007669"/>
    <property type="project" value="TreeGrafter"/>
</dbReference>
<dbReference type="FunFam" id="3.30.70.1300:FF:000001">
    <property type="entry name" value="UPF0301 protein YqgE"/>
    <property type="match status" value="1"/>
</dbReference>
<dbReference type="Gene3D" id="3.40.1740.10">
    <property type="entry name" value="VC0467-like"/>
    <property type="match status" value="1"/>
</dbReference>
<dbReference type="Gene3D" id="3.30.70.1300">
    <property type="entry name" value="VC0467-like domains"/>
    <property type="match status" value="1"/>
</dbReference>
<dbReference type="HAMAP" id="MF_00758">
    <property type="entry name" value="UPF0301"/>
    <property type="match status" value="1"/>
</dbReference>
<dbReference type="InterPro" id="IPR003774">
    <property type="entry name" value="AlgH-like"/>
</dbReference>
<dbReference type="NCBIfam" id="NF001266">
    <property type="entry name" value="PRK00228.1-1"/>
    <property type="match status" value="1"/>
</dbReference>
<dbReference type="PANTHER" id="PTHR30327">
    <property type="entry name" value="UNCHARACTERIZED PROTEIN YQGE"/>
    <property type="match status" value="1"/>
</dbReference>
<dbReference type="PANTHER" id="PTHR30327:SF1">
    <property type="entry name" value="UPF0301 PROTEIN YQGE"/>
    <property type="match status" value="1"/>
</dbReference>
<dbReference type="Pfam" id="PF02622">
    <property type="entry name" value="DUF179"/>
    <property type="match status" value="1"/>
</dbReference>
<dbReference type="SUPFAM" id="SSF143456">
    <property type="entry name" value="VC0467-like"/>
    <property type="match status" value="1"/>
</dbReference>
<keyword id="KW-1185">Reference proteome</keyword>
<proteinExistence type="inferred from homology"/>
<protein>
    <recommendedName>
        <fullName evidence="1">UPF0301 protein YqgE</fullName>
    </recommendedName>
</protein>
<accession>B7MMD6</accession>
<sequence length="187" mass="20686">MNLQHHFLIAMPALQDPIFRRSVVYICEHNTNGAMGIIVNKPLENLKIEGILEKLKITPEPRDESIRLDKPVMLGGPLAEDRGFILHTPPSNFASSIRISDNTVMTTSRDVLETLGTDKQPSDVLVALGYASWEKGQLEQEILDNAWLTAPADLNILFKTPIADRWREAAKLIGVDILTMPGVAGHA</sequence>